<evidence type="ECO:0000255" key="1">
    <source>
        <dbReference type="PROSITE-ProRule" id="PRU00042"/>
    </source>
</evidence>
<evidence type="ECO:0000255" key="2">
    <source>
        <dbReference type="PROSITE-ProRule" id="PRU00119"/>
    </source>
</evidence>
<evidence type="ECO:0000303" key="3">
    <source>
    </source>
</evidence>
<evidence type="ECO:0000303" key="4">
    <source>
    </source>
</evidence>
<evidence type="ECO:0000303" key="5">
    <source>
    </source>
</evidence>
<evidence type="ECO:0000305" key="6"/>
<dbReference type="EMBL" id="S54641">
    <property type="protein sequence ID" value="AAB25346.1"/>
    <property type="molecule type" value="mRNA"/>
</dbReference>
<dbReference type="EMBL" id="S54641">
    <property type="protein sequence ID" value="AAB25347.1"/>
    <property type="molecule type" value="mRNA"/>
</dbReference>
<dbReference type="EMBL" id="AK054647">
    <property type="protein sequence ID" value="BAG51405.1"/>
    <property type="molecule type" value="mRNA"/>
</dbReference>
<dbReference type="EMBL" id="AL390728">
    <property type="status" value="NOT_ANNOTATED_CDS"/>
    <property type="molecule type" value="Genomic_DNA"/>
</dbReference>
<dbReference type="EMBL" id="CH471148">
    <property type="protein sequence ID" value="EAW77169.1"/>
    <property type="molecule type" value="Genomic_DNA"/>
</dbReference>
<dbReference type="EMBL" id="BC032514">
    <property type="status" value="NOT_ANNOTATED_CDS"/>
    <property type="molecule type" value="mRNA"/>
</dbReference>
<dbReference type="EMBL" id="BC096349">
    <property type="protein sequence ID" value="AAH96349.1"/>
    <property type="molecule type" value="mRNA"/>
</dbReference>
<dbReference type="EMBL" id="BC096350">
    <property type="protein sequence ID" value="AAH96350.1"/>
    <property type="molecule type" value="mRNA"/>
</dbReference>
<dbReference type="EMBL" id="BC096351">
    <property type="protein sequence ID" value="AAH96351.1"/>
    <property type="molecule type" value="mRNA"/>
</dbReference>
<dbReference type="EMBL" id="BC099661">
    <property type="protein sequence ID" value="AAH99661.1"/>
    <property type="molecule type" value="mRNA"/>
</dbReference>
<dbReference type="CCDS" id="CCDS31089.1">
    <molecule id="Q15973-4"/>
</dbReference>
<dbReference type="CCDS" id="CCDS58067.1">
    <molecule id="Q15973-5"/>
</dbReference>
<dbReference type="CCDS" id="CCDS73057.1">
    <molecule id="Q15973-3"/>
</dbReference>
<dbReference type="PIR" id="A45447">
    <property type="entry name" value="A45447"/>
</dbReference>
<dbReference type="PIR" id="B45447">
    <property type="entry name" value="B45447"/>
</dbReference>
<dbReference type="RefSeq" id="NP_001230669.1">
    <molecule id="Q15973-5"/>
    <property type="nucleotide sequence ID" value="NM_001243740.3"/>
</dbReference>
<dbReference type="RefSeq" id="NP_001284497.1">
    <molecule id="Q15973-3"/>
    <property type="nucleotide sequence ID" value="NM_001297568.2"/>
</dbReference>
<dbReference type="RefSeq" id="NP_001284498.1">
    <property type="nucleotide sequence ID" value="NM_001297569.1"/>
</dbReference>
<dbReference type="RefSeq" id="NP_003422.2">
    <molecule id="Q15973-4"/>
    <property type="nucleotide sequence ID" value="NM_003431.3"/>
</dbReference>
<dbReference type="RefSeq" id="XP_054194600.1">
    <molecule id="Q15973-3"/>
    <property type="nucleotide sequence ID" value="XM_054338625.1"/>
</dbReference>
<dbReference type="RefSeq" id="XP_054194601.1">
    <molecule id="Q15973-3"/>
    <property type="nucleotide sequence ID" value="XM_054338626.1"/>
</dbReference>
<dbReference type="RefSeq" id="XP_054194602.1">
    <molecule id="Q15973-3"/>
    <property type="nucleotide sequence ID" value="XM_054338627.1"/>
</dbReference>
<dbReference type="RefSeq" id="XP_054194603.1">
    <molecule id="Q15973-3"/>
    <property type="nucleotide sequence ID" value="XM_054338628.1"/>
</dbReference>
<dbReference type="SMR" id="Q15973"/>
<dbReference type="BioGRID" id="113476">
    <property type="interactions" value="61"/>
</dbReference>
<dbReference type="FunCoup" id="Q15973">
    <property type="interactions" value="32"/>
</dbReference>
<dbReference type="IntAct" id="Q15973">
    <property type="interactions" value="59"/>
</dbReference>
<dbReference type="STRING" id="9606.ENSP00000440365"/>
<dbReference type="iPTMnet" id="Q15973"/>
<dbReference type="PhosphoSitePlus" id="Q15973"/>
<dbReference type="BioMuta" id="ZNF124"/>
<dbReference type="DMDM" id="76803836"/>
<dbReference type="jPOST" id="Q15973"/>
<dbReference type="MassIVE" id="Q15973"/>
<dbReference type="PaxDb" id="9606-ENSP00000440365"/>
<dbReference type="PeptideAtlas" id="Q15973"/>
<dbReference type="ProteomicsDB" id="60824">
    <molecule id="Q15973-3"/>
</dbReference>
<dbReference type="ProteomicsDB" id="60825">
    <molecule id="Q15973-1"/>
</dbReference>
<dbReference type="ProteomicsDB" id="60826">
    <molecule id="Q15973-2"/>
</dbReference>
<dbReference type="ProteomicsDB" id="60827">
    <molecule id="Q15973-4"/>
</dbReference>
<dbReference type="Pumba" id="Q15973"/>
<dbReference type="Antibodypedia" id="20838">
    <property type="antibodies" value="166 antibodies from 25 providers"/>
</dbReference>
<dbReference type="DNASU" id="7678"/>
<dbReference type="Ensembl" id="ENST00000340684.10">
    <molecule id="Q15973-4"/>
    <property type="protein sequence ID" value="ENSP00000340749.6"/>
    <property type="gene ID" value="ENSG00000196418.13"/>
</dbReference>
<dbReference type="Ensembl" id="ENST00000472531.5">
    <molecule id="Q15973-5"/>
    <property type="protein sequence ID" value="ENSP00000462445.1"/>
    <property type="gene ID" value="ENSG00000196418.13"/>
</dbReference>
<dbReference type="Ensembl" id="ENST00000543802.3">
    <molecule id="Q15973-3"/>
    <property type="protein sequence ID" value="ENSP00000440365.2"/>
    <property type="gene ID" value="ENSG00000196418.13"/>
</dbReference>
<dbReference type="GeneID" id="7678"/>
<dbReference type="KEGG" id="hsa:7678"/>
<dbReference type="MANE-Select" id="ENST00000543802.3">
    <property type="protein sequence ID" value="ENSP00000440365.2"/>
    <property type="RefSeq nucleotide sequence ID" value="NM_001297568.2"/>
    <property type="RefSeq protein sequence ID" value="NP_001284497.1"/>
</dbReference>
<dbReference type="UCSC" id="uc001ici.4">
    <molecule id="Q15973-3"/>
    <property type="organism name" value="human"/>
</dbReference>
<dbReference type="AGR" id="HGNC:12907"/>
<dbReference type="CTD" id="7678"/>
<dbReference type="DisGeNET" id="7678"/>
<dbReference type="GeneCards" id="ZNF124"/>
<dbReference type="HGNC" id="HGNC:12907">
    <property type="gene designation" value="ZNF124"/>
</dbReference>
<dbReference type="HPA" id="ENSG00000196418">
    <property type="expression patterns" value="Low tissue specificity"/>
</dbReference>
<dbReference type="MIM" id="194631">
    <property type="type" value="gene"/>
</dbReference>
<dbReference type="neXtProt" id="NX_Q15973"/>
<dbReference type="OpenTargets" id="ENSG00000196418"/>
<dbReference type="PharmGKB" id="PA37496"/>
<dbReference type="VEuPathDB" id="HostDB:ENSG00000196418"/>
<dbReference type="eggNOG" id="KOG1721">
    <property type="taxonomic scope" value="Eukaryota"/>
</dbReference>
<dbReference type="GeneTree" id="ENSGT00940000164793"/>
<dbReference type="HOGENOM" id="CLU_002678_69_14_1"/>
<dbReference type="InParanoid" id="Q15973"/>
<dbReference type="OMA" id="NGHYSCT"/>
<dbReference type="OrthoDB" id="9507402at2759"/>
<dbReference type="PAN-GO" id="Q15973">
    <property type="GO annotations" value="3 GO annotations based on evolutionary models"/>
</dbReference>
<dbReference type="PhylomeDB" id="Q15973"/>
<dbReference type="TreeFam" id="TF338854"/>
<dbReference type="PathwayCommons" id="Q15973"/>
<dbReference type="Reactome" id="R-HSA-212436">
    <property type="pathway name" value="Generic Transcription Pathway"/>
</dbReference>
<dbReference type="SignaLink" id="Q15973"/>
<dbReference type="BioGRID-ORCS" id="7678">
    <property type="hits" value="14 hits in 1186 CRISPR screens"/>
</dbReference>
<dbReference type="ChiTaRS" id="ZNF124">
    <property type="organism name" value="human"/>
</dbReference>
<dbReference type="GenomeRNAi" id="7678"/>
<dbReference type="Pharos" id="Q15973">
    <property type="development level" value="Tbio"/>
</dbReference>
<dbReference type="PRO" id="PR:Q15973"/>
<dbReference type="Proteomes" id="UP000005640">
    <property type="component" value="Chromosome 1"/>
</dbReference>
<dbReference type="RNAct" id="Q15973">
    <property type="molecule type" value="protein"/>
</dbReference>
<dbReference type="Bgee" id="ENSG00000196418">
    <property type="expression patterns" value="Expressed in colonic epithelium and 160 other cell types or tissues"/>
</dbReference>
<dbReference type="ExpressionAtlas" id="Q15973">
    <property type="expression patterns" value="baseline and differential"/>
</dbReference>
<dbReference type="GO" id="GO:0005634">
    <property type="term" value="C:nucleus"/>
    <property type="evidence" value="ECO:0000318"/>
    <property type="project" value="GO_Central"/>
</dbReference>
<dbReference type="GO" id="GO:0003677">
    <property type="term" value="F:DNA binding"/>
    <property type="evidence" value="ECO:0000304"/>
    <property type="project" value="ProtInc"/>
</dbReference>
<dbReference type="GO" id="GO:0000981">
    <property type="term" value="F:DNA-binding transcription factor activity, RNA polymerase II-specific"/>
    <property type="evidence" value="ECO:0000318"/>
    <property type="project" value="GO_Central"/>
</dbReference>
<dbReference type="GO" id="GO:0000977">
    <property type="term" value="F:RNA polymerase II transcription regulatory region sequence-specific DNA binding"/>
    <property type="evidence" value="ECO:0000318"/>
    <property type="project" value="GO_Central"/>
</dbReference>
<dbReference type="GO" id="GO:0008270">
    <property type="term" value="F:zinc ion binding"/>
    <property type="evidence" value="ECO:0007669"/>
    <property type="project" value="UniProtKB-KW"/>
</dbReference>
<dbReference type="GO" id="GO:0006357">
    <property type="term" value="P:regulation of transcription by RNA polymerase II"/>
    <property type="evidence" value="ECO:0000318"/>
    <property type="project" value="GO_Central"/>
</dbReference>
<dbReference type="CDD" id="cd07765">
    <property type="entry name" value="KRAB_A-box"/>
    <property type="match status" value="1"/>
</dbReference>
<dbReference type="FunFam" id="3.30.160.60:FF:002368">
    <property type="entry name" value="Zinc finger protein 124"/>
    <property type="match status" value="2"/>
</dbReference>
<dbReference type="FunFam" id="3.30.160.60:FF:000193">
    <property type="entry name" value="Zinc finger protein 300"/>
    <property type="match status" value="1"/>
</dbReference>
<dbReference type="FunFam" id="3.30.160.60:FF:002343">
    <property type="entry name" value="Zinc finger protein 33A"/>
    <property type="match status" value="1"/>
</dbReference>
<dbReference type="FunFam" id="3.30.160.60:FF:000338">
    <property type="entry name" value="zinc finger protein 383"/>
    <property type="match status" value="1"/>
</dbReference>
<dbReference type="FunFam" id="3.30.160.60:FF:002254">
    <property type="entry name" value="Zinc finger protein 540"/>
    <property type="match status" value="2"/>
</dbReference>
<dbReference type="FunFam" id="3.30.160.60:FF:000180">
    <property type="entry name" value="Zinc finger protein 689"/>
    <property type="match status" value="1"/>
</dbReference>
<dbReference type="Gene3D" id="6.10.140.140">
    <property type="match status" value="1"/>
</dbReference>
<dbReference type="Gene3D" id="3.30.160.60">
    <property type="entry name" value="Classic Zinc Finger"/>
    <property type="match status" value="8"/>
</dbReference>
<dbReference type="InterPro" id="IPR001909">
    <property type="entry name" value="KRAB"/>
</dbReference>
<dbReference type="InterPro" id="IPR036051">
    <property type="entry name" value="KRAB_dom_sf"/>
</dbReference>
<dbReference type="InterPro" id="IPR036236">
    <property type="entry name" value="Znf_C2H2_sf"/>
</dbReference>
<dbReference type="InterPro" id="IPR013087">
    <property type="entry name" value="Znf_C2H2_type"/>
</dbReference>
<dbReference type="PANTHER" id="PTHR24399">
    <property type="entry name" value="ZINC FINGER AND BTB DOMAIN-CONTAINING"/>
    <property type="match status" value="1"/>
</dbReference>
<dbReference type="PANTHER" id="PTHR24399:SF67">
    <property type="entry name" value="ZINC FINGER PROTEIN 709-LIKE"/>
    <property type="match status" value="1"/>
</dbReference>
<dbReference type="Pfam" id="PF01352">
    <property type="entry name" value="KRAB"/>
    <property type="match status" value="1"/>
</dbReference>
<dbReference type="Pfam" id="PF00096">
    <property type="entry name" value="zf-C2H2"/>
    <property type="match status" value="7"/>
</dbReference>
<dbReference type="Pfam" id="PF13894">
    <property type="entry name" value="zf-C2H2_4"/>
    <property type="match status" value="1"/>
</dbReference>
<dbReference type="SMART" id="SM00349">
    <property type="entry name" value="KRAB"/>
    <property type="match status" value="1"/>
</dbReference>
<dbReference type="SMART" id="SM00355">
    <property type="entry name" value="ZnF_C2H2"/>
    <property type="match status" value="8"/>
</dbReference>
<dbReference type="SUPFAM" id="SSF57667">
    <property type="entry name" value="beta-beta-alpha zinc fingers"/>
    <property type="match status" value="5"/>
</dbReference>
<dbReference type="SUPFAM" id="SSF109640">
    <property type="entry name" value="KRAB domain (Kruppel-associated box)"/>
    <property type="match status" value="1"/>
</dbReference>
<dbReference type="PROSITE" id="PS50805">
    <property type="entry name" value="KRAB"/>
    <property type="match status" value="1"/>
</dbReference>
<dbReference type="PROSITE" id="PS00028">
    <property type="entry name" value="ZINC_FINGER_C2H2_1"/>
    <property type="match status" value="8"/>
</dbReference>
<dbReference type="PROSITE" id="PS50157">
    <property type="entry name" value="ZINC_FINGER_C2H2_2"/>
    <property type="match status" value="8"/>
</dbReference>
<sequence>MSGHPGSWEMNSVAFEDVAVNFTQEEWALLDPSQKNLYRDVMQETFRNLASIGNKGEDQSIEDQYKNSSRNLRHIISHSGNNPYGCEECGKKPCTCKQCQKTSLSVTRVHRDTVMHTGNGHYGCTICEKVFNIPSSFQIHQRNHTGEKPYECMECGKALGFSRSLNRHKRIHTGEKRYECKQCGKAFSRSSHLRDHERTHTGEKPYECKHCGKAFRYSNCLHYHERTHTGEKPYVCMECGKAFSCLSSLQGHIKAHAGEEPYPCKQCGKAFRYASSLQKHEKTHIAQKPYVCNNCGKGFRCSSSLRDHERTHTGEKPYECQKCGKAFSRASTLWKHKKTHTGEKPYKCKKM</sequence>
<reference key="1">
    <citation type="journal article" date="1993" name="Am. J. Hum. Genet.">
        <title>A novel zinc finger gene on human chromosome 1qter that is alternatively spliced in human tissues and cell lines.</title>
        <authorList>
            <person name="Saleh M."/>
            <person name="Selleri L."/>
            <person name="Evans G.A."/>
        </authorList>
    </citation>
    <scope>NUCLEOTIDE SEQUENCE [MRNA] (ISOFORMS 3 AND 4)</scope>
</reference>
<reference key="2">
    <citation type="journal article" date="2004" name="Nat. Genet.">
        <title>Complete sequencing and characterization of 21,243 full-length human cDNAs.</title>
        <authorList>
            <person name="Ota T."/>
            <person name="Suzuki Y."/>
            <person name="Nishikawa T."/>
            <person name="Otsuki T."/>
            <person name="Sugiyama T."/>
            <person name="Irie R."/>
            <person name="Wakamatsu A."/>
            <person name="Hayashi K."/>
            <person name="Sato H."/>
            <person name="Nagai K."/>
            <person name="Kimura K."/>
            <person name="Makita H."/>
            <person name="Sekine M."/>
            <person name="Obayashi M."/>
            <person name="Nishi T."/>
            <person name="Shibahara T."/>
            <person name="Tanaka T."/>
            <person name="Ishii S."/>
            <person name="Yamamoto J."/>
            <person name="Saito K."/>
            <person name="Kawai Y."/>
            <person name="Isono Y."/>
            <person name="Nakamura Y."/>
            <person name="Nagahari K."/>
            <person name="Murakami K."/>
            <person name="Yasuda T."/>
            <person name="Iwayanagi T."/>
            <person name="Wagatsuma M."/>
            <person name="Shiratori A."/>
            <person name="Sudo H."/>
            <person name="Hosoiri T."/>
            <person name="Kaku Y."/>
            <person name="Kodaira H."/>
            <person name="Kondo H."/>
            <person name="Sugawara M."/>
            <person name="Takahashi M."/>
            <person name="Kanda K."/>
            <person name="Yokoi T."/>
            <person name="Furuya T."/>
            <person name="Kikkawa E."/>
            <person name="Omura Y."/>
            <person name="Abe K."/>
            <person name="Kamihara K."/>
            <person name="Katsuta N."/>
            <person name="Sato K."/>
            <person name="Tanikawa M."/>
            <person name="Yamazaki M."/>
            <person name="Ninomiya K."/>
            <person name="Ishibashi T."/>
            <person name="Yamashita H."/>
            <person name="Murakawa K."/>
            <person name="Fujimori K."/>
            <person name="Tanai H."/>
            <person name="Kimata M."/>
            <person name="Watanabe M."/>
            <person name="Hiraoka S."/>
            <person name="Chiba Y."/>
            <person name="Ishida S."/>
            <person name="Ono Y."/>
            <person name="Takiguchi S."/>
            <person name="Watanabe S."/>
            <person name="Yosida M."/>
            <person name="Hotuta T."/>
            <person name="Kusano J."/>
            <person name="Kanehori K."/>
            <person name="Takahashi-Fujii A."/>
            <person name="Hara H."/>
            <person name="Tanase T.-O."/>
            <person name="Nomura Y."/>
            <person name="Togiya S."/>
            <person name="Komai F."/>
            <person name="Hara R."/>
            <person name="Takeuchi K."/>
            <person name="Arita M."/>
            <person name="Imose N."/>
            <person name="Musashino K."/>
            <person name="Yuuki H."/>
            <person name="Oshima A."/>
            <person name="Sasaki N."/>
            <person name="Aotsuka S."/>
            <person name="Yoshikawa Y."/>
            <person name="Matsunawa H."/>
            <person name="Ichihara T."/>
            <person name="Shiohata N."/>
            <person name="Sano S."/>
            <person name="Moriya S."/>
            <person name="Momiyama H."/>
            <person name="Satoh N."/>
            <person name="Takami S."/>
            <person name="Terashima Y."/>
            <person name="Suzuki O."/>
            <person name="Nakagawa S."/>
            <person name="Senoh A."/>
            <person name="Mizoguchi H."/>
            <person name="Goto Y."/>
            <person name="Shimizu F."/>
            <person name="Wakebe H."/>
            <person name="Hishigaki H."/>
            <person name="Watanabe T."/>
            <person name="Sugiyama A."/>
            <person name="Takemoto M."/>
            <person name="Kawakami B."/>
            <person name="Yamazaki M."/>
            <person name="Watanabe K."/>
            <person name="Kumagai A."/>
            <person name="Itakura S."/>
            <person name="Fukuzumi Y."/>
            <person name="Fujimori Y."/>
            <person name="Komiyama M."/>
            <person name="Tashiro H."/>
            <person name="Tanigami A."/>
            <person name="Fujiwara T."/>
            <person name="Ono T."/>
            <person name="Yamada K."/>
            <person name="Fujii Y."/>
            <person name="Ozaki K."/>
            <person name="Hirao M."/>
            <person name="Ohmori Y."/>
            <person name="Kawabata A."/>
            <person name="Hikiji T."/>
            <person name="Kobatake N."/>
            <person name="Inagaki H."/>
            <person name="Ikema Y."/>
            <person name="Okamoto S."/>
            <person name="Okitani R."/>
            <person name="Kawakami T."/>
            <person name="Noguchi S."/>
            <person name="Itoh T."/>
            <person name="Shigeta K."/>
            <person name="Senba T."/>
            <person name="Matsumura K."/>
            <person name="Nakajima Y."/>
            <person name="Mizuno T."/>
            <person name="Morinaga M."/>
            <person name="Sasaki M."/>
            <person name="Togashi T."/>
            <person name="Oyama M."/>
            <person name="Hata H."/>
            <person name="Watanabe M."/>
            <person name="Komatsu T."/>
            <person name="Mizushima-Sugano J."/>
            <person name="Satoh T."/>
            <person name="Shirai Y."/>
            <person name="Takahashi Y."/>
            <person name="Nakagawa K."/>
            <person name="Okumura K."/>
            <person name="Nagase T."/>
            <person name="Nomura N."/>
            <person name="Kikuchi H."/>
            <person name="Masuho Y."/>
            <person name="Yamashita R."/>
            <person name="Nakai K."/>
            <person name="Yada T."/>
            <person name="Nakamura Y."/>
            <person name="Ohara O."/>
            <person name="Isogai T."/>
            <person name="Sugano S."/>
        </authorList>
    </citation>
    <scope>NUCLEOTIDE SEQUENCE [LARGE SCALE MRNA] (ISOFORM 2)</scope>
</reference>
<reference key="3">
    <citation type="journal article" date="2006" name="Nature">
        <title>The DNA sequence and biological annotation of human chromosome 1.</title>
        <authorList>
            <person name="Gregory S.G."/>
            <person name="Barlow K.F."/>
            <person name="McLay K.E."/>
            <person name="Kaul R."/>
            <person name="Swarbreck D."/>
            <person name="Dunham A."/>
            <person name="Scott C.E."/>
            <person name="Howe K.L."/>
            <person name="Woodfine K."/>
            <person name="Spencer C.C.A."/>
            <person name="Jones M.C."/>
            <person name="Gillson C."/>
            <person name="Searle S."/>
            <person name="Zhou Y."/>
            <person name="Kokocinski F."/>
            <person name="McDonald L."/>
            <person name="Evans R."/>
            <person name="Phillips K."/>
            <person name="Atkinson A."/>
            <person name="Cooper R."/>
            <person name="Jones C."/>
            <person name="Hall R.E."/>
            <person name="Andrews T.D."/>
            <person name="Lloyd C."/>
            <person name="Ainscough R."/>
            <person name="Almeida J.P."/>
            <person name="Ambrose K.D."/>
            <person name="Anderson F."/>
            <person name="Andrew R.W."/>
            <person name="Ashwell R.I.S."/>
            <person name="Aubin K."/>
            <person name="Babbage A.K."/>
            <person name="Bagguley C.L."/>
            <person name="Bailey J."/>
            <person name="Beasley H."/>
            <person name="Bethel G."/>
            <person name="Bird C.P."/>
            <person name="Bray-Allen S."/>
            <person name="Brown J.Y."/>
            <person name="Brown A.J."/>
            <person name="Buckley D."/>
            <person name="Burton J."/>
            <person name="Bye J."/>
            <person name="Carder C."/>
            <person name="Chapman J.C."/>
            <person name="Clark S.Y."/>
            <person name="Clarke G."/>
            <person name="Clee C."/>
            <person name="Cobley V."/>
            <person name="Collier R.E."/>
            <person name="Corby N."/>
            <person name="Coville G.J."/>
            <person name="Davies J."/>
            <person name="Deadman R."/>
            <person name="Dunn M."/>
            <person name="Earthrowl M."/>
            <person name="Ellington A.G."/>
            <person name="Errington H."/>
            <person name="Frankish A."/>
            <person name="Frankland J."/>
            <person name="French L."/>
            <person name="Garner P."/>
            <person name="Garnett J."/>
            <person name="Gay L."/>
            <person name="Ghori M.R.J."/>
            <person name="Gibson R."/>
            <person name="Gilby L.M."/>
            <person name="Gillett W."/>
            <person name="Glithero R.J."/>
            <person name="Grafham D.V."/>
            <person name="Griffiths C."/>
            <person name="Griffiths-Jones S."/>
            <person name="Grocock R."/>
            <person name="Hammond S."/>
            <person name="Harrison E.S.I."/>
            <person name="Hart E."/>
            <person name="Haugen E."/>
            <person name="Heath P.D."/>
            <person name="Holmes S."/>
            <person name="Holt K."/>
            <person name="Howden P.J."/>
            <person name="Hunt A.R."/>
            <person name="Hunt S.E."/>
            <person name="Hunter G."/>
            <person name="Isherwood J."/>
            <person name="James R."/>
            <person name="Johnson C."/>
            <person name="Johnson D."/>
            <person name="Joy A."/>
            <person name="Kay M."/>
            <person name="Kershaw J.K."/>
            <person name="Kibukawa M."/>
            <person name="Kimberley A.M."/>
            <person name="King A."/>
            <person name="Knights A.J."/>
            <person name="Lad H."/>
            <person name="Laird G."/>
            <person name="Lawlor S."/>
            <person name="Leongamornlert D.A."/>
            <person name="Lloyd D.M."/>
            <person name="Loveland J."/>
            <person name="Lovell J."/>
            <person name="Lush M.J."/>
            <person name="Lyne R."/>
            <person name="Martin S."/>
            <person name="Mashreghi-Mohammadi M."/>
            <person name="Matthews L."/>
            <person name="Matthews N.S.W."/>
            <person name="McLaren S."/>
            <person name="Milne S."/>
            <person name="Mistry S."/>
            <person name="Moore M.J.F."/>
            <person name="Nickerson T."/>
            <person name="O'Dell C.N."/>
            <person name="Oliver K."/>
            <person name="Palmeiri A."/>
            <person name="Palmer S.A."/>
            <person name="Parker A."/>
            <person name="Patel D."/>
            <person name="Pearce A.V."/>
            <person name="Peck A.I."/>
            <person name="Pelan S."/>
            <person name="Phelps K."/>
            <person name="Phillimore B.J."/>
            <person name="Plumb R."/>
            <person name="Rajan J."/>
            <person name="Raymond C."/>
            <person name="Rouse G."/>
            <person name="Saenphimmachak C."/>
            <person name="Sehra H.K."/>
            <person name="Sheridan E."/>
            <person name="Shownkeen R."/>
            <person name="Sims S."/>
            <person name="Skuce C.D."/>
            <person name="Smith M."/>
            <person name="Steward C."/>
            <person name="Subramanian S."/>
            <person name="Sycamore N."/>
            <person name="Tracey A."/>
            <person name="Tromans A."/>
            <person name="Van Helmond Z."/>
            <person name="Wall M."/>
            <person name="Wallis J.M."/>
            <person name="White S."/>
            <person name="Whitehead S.L."/>
            <person name="Wilkinson J.E."/>
            <person name="Willey D.L."/>
            <person name="Williams H."/>
            <person name="Wilming L."/>
            <person name="Wray P.W."/>
            <person name="Wu Z."/>
            <person name="Coulson A."/>
            <person name="Vaudin M."/>
            <person name="Sulston J.E."/>
            <person name="Durbin R.M."/>
            <person name="Hubbard T."/>
            <person name="Wooster R."/>
            <person name="Dunham I."/>
            <person name="Carter N.P."/>
            <person name="McVean G."/>
            <person name="Ross M.T."/>
            <person name="Harrow J."/>
            <person name="Olson M.V."/>
            <person name="Beck S."/>
            <person name="Rogers J."/>
            <person name="Bentley D.R."/>
        </authorList>
    </citation>
    <scope>NUCLEOTIDE SEQUENCE [LARGE SCALE GENOMIC DNA]</scope>
</reference>
<reference key="4">
    <citation type="submission" date="2005-07" db="EMBL/GenBank/DDBJ databases">
        <authorList>
            <person name="Mural R.J."/>
            <person name="Istrail S."/>
            <person name="Sutton G.G."/>
            <person name="Florea L."/>
            <person name="Halpern A.L."/>
            <person name="Mobarry C.M."/>
            <person name="Lippert R."/>
            <person name="Walenz B."/>
            <person name="Shatkay H."/>
            <person name="Dew I."/>
            <person name="Miller J.R."/>
            <person name="Flanigan M.J."/>
            <person name="Edwards N.J."/>
            <person name="Bolanos R."/>
            <person name="Fasulo D."/>
            <person name="Halldorsson B.V."/>
            <person name="Hannenhalli S."/>
            <person name="Turner R."/>
            <person name="Yooseph S."/>
            <person name="Lu F."/>
            <person name="Nusskern D.R."/>
            <person name="Shue B.C."/>
            <person name="Zheng X.H."/>
            <person name="Zhong F."/>
            <person name="Delcher A.L."/>
            <person name="Huson D.H."/>
            <person name="Kravitz S.A."/>
            <person name="Mouchard L."/>
            <person name="Reinert K."/>
            <person name="Remington K.A."/>
            <person name="Clark A.G."/>
            <person name="Waterman M.S."/>
            <person name="Eichler E.E."/>
            <person name="Adams M.D."/>
            <person name="Hunkapiller M.W."/>
            <person name="Myers E.W."/>
            <person name="Venter J.C."/>
        </authorList>
    </citation>
    <scope>NUCLEOTIDE SEQUENCE [LARGE SCALE GENOMIC DNA]</scope>
</reference>
<reference key="5">
    <citation type="journal article" date="2004" name="Genome Res.">
        <title>The status, quality, and expansion of the NIH full-length cDNA project: the Mammalian Gene Collection (MGC).</title>
        <authorList>
            <consortium name="The MGC Project Team"/>
        </authorList>
    </citation>
    <scope>NUCLEOTIDE SEQUENCE [LARGE SCALE MRNA] (ISOFORMS 1; 2 AND 5)</scope>
    <source>
        <tissue>Retinoblastoma</tissue>
    </source>
</reference>
<gene>
    <name type="primary">ZNF124</name>
</gene>
<proteinExistence type="evidence at protein level"/>
<name>ZN124_HUMAN</name>
<keyword id="KW-0025">Alternative splicing</keyword>
<keyword id="KW-0238">DNA-binding</keyword>
<keyword id="KW-0479">Metal-binding</keyword>
<keyword id="KW-0539">Nucleus</keyword>
<keyword id="KW-1267">Proteomics identification</keyword>
<keyword id="KW-1185">Reference proteome</keyword>
<keyword id="KW-0677">Repeat</keyword>
<keyword id="KW-0804">Transcription</keyword>
<keyword id="KW-0805">Transcription regulation</keyword>
<keyword id="KW-0862">Zinc</keyword>
<keyword id="KW-0863">Zinc-finger</keyword>
<accession>Q15973</accession>
<accession>B3KNP3</accession>
<accession>J3KSE1</accession>
<accession>Q15974</accession>
<accession>Q4VAJ7</accession>
<accession>Q5T2V4</accession>
<organism>
    <name type="scientific">Homo sapiens</name>
    <name type="common">Human</name>
    <dbReference type="NCBI Taxonomy" id="9606"/>
    <lineage>
        <taxon>Eukaryota</taxon>
        <taxon>Metazoa</taxon>
        <taxon>Chordata</taxon>
        <taxon>Craniata</taxon>
        <taxon>Vertebrata</taxon>
        <taxon>Euteleostomi</taxon>
        <taxon>Mammalia</taxon>
        <taxon>Eutheria</taxon>
        <taxon>Euarchontoglires</taxon>
        <taxon>Primates</taxon>
        <taxon>Haplorrhini</taxon>
        <taxon>Catarrhini</taxon>
        <taxon>Hominidae</taxon>
        <taxon>Homo</taxon>
    </lineage>
</organism>
<comment type="function">
    <text>May be involved in transcriptional regulation.</text>
</comment>
<comment type="interaction">
    <interactant intactId="EBI-2555767">
        <id>Q15973</id>
    </interactant>
    <interactant intactId="EBI-12823597">
        <id>Q9Y4X0-3</id>
        <label>AMMECR1</label>
    </interactant>
    <organismsDiffer>false</organismsDiffer>
    <experiments>3</experiments>
</comment>
<comment type="interaction">
    <interactant intactId="EBI-2555767">
        <id>Q15973</id>
    </interactant>
    <interactant intactId="EBI-4400025">
        <id>Q9Y2T1</id>
        <label>AXIN2</label>
    </interactant>
    <organismsDiffer>false</organismsDiffer>
    <experiments>3</experiments>
</comment>
<comment type="interaction">
    <interactant intactId="EBI-2555767">
        <id>Q15973</id>
    </interactant>
    <interactant intactId="EBI-1642333">
        <id>Q9BYV9</id>
        <label>BACH2</label>
    </interactant>
    <organismsDiffer>false</organismsDiffer>
    <experiments>3</experiments>
</comment>
<comment type="interaction">
    <interactant intactId="EBI-2555767">
        <id>Q15973</id>
    </interactant>
    <interactant intactId="EBI-2548012">
        <id>Q9H2G9</id>
        <label>BLZF1</label>
    </interactant>
    <organismsDiffer>false</organismsDiffer>
    <experiments>3</experiments>
</comment>
<comment type="interaction">
    <interactant intactId="EBI-2555767">
        <id>Q15973</id>
    </interactant>
    <interactant intactId="EBI-748961">
        <id>O95273</id>
        <label>CCNDBP1</label>
    </interactant>
    <organismsDiffer>false</organismsDiffer>
    <experiments>3</experiments>
</comment>
<comment type="interaction">
    <interactant intactId="EBI-2555767">
        <id>Q15973</id>
    </interactant>
    <interactant intactId="EBI-3867333">
        <id>A8MQ03</id>
        <label>CYSRT1</label>
    </interactant>
    <organismsDiffer>false</organismsDiffer>
    <experiments>3</experiments>
</comment>
<comment type="interaction">
    <interactant intactId="EBI-2555767">
        <id>Q15973</id>
    </interactant>
    <interactant intactId="EBI-11988027">
        <id>Q9NRI5-2</id>
        <label>DISC1</label>
    </interactant>
    <organismsDiffer>false</organismsDiffer>
    <experiments>3</experiments>
</comment>
<comment type="interaction">
    <interactant intactId="EBI-2555767">
        <id>Q15973</id>
    </interactant>
    <interactant intactId="EBI-10976677">
        <id>G5E9A7</id>
        <label>DMWD</label>
    </interactant>
    <organismsDiffer>false</organismsDiffer>
    <experiments>3</experiments>
</comment>
<comment type="interaction">
    <interactant intactId="EBI-2555767">
        <id>Q15973</id>
    </interactant>
    <interactant intactId="EBI-750641">
        <id>Q5TD97</id>
        <label>FHL5</label>
    </interactant>
    <organismsDiffer>false</organismsDiffer>
    <experiments>3</experiments>
</comment>
<comment type="interaction">
    <interactant intactId="EBI-2555767">
        <id>Q15973</id>
    </interactant>
    <interactant intactId="EBI-10226858">
        <id>Q0VDC6</id>
        <label>FKBP1A</label>
    </interactant>
    <organismsDiffer>false</organismsDiffer>
    <experiments>3</experiments>
</comment>
<comment type="interaction">
    <interactant intactId="EBI-2555767">
        <id>Q15973</id>
    </interactant>
    <interactant intactId="EBI-725515">
        <id>O43559</id>
        <label>FRS3</label>
    </interactant>
    <organismsDiffer>false</organismsDiffer>
    <experiments>3</experiments>
</comment>
<comment type="interaction">
    <interactant intactId="EBI-2555767">
        <id>Q15973</id>
    </interactant>
    <interactant intactId="EBI-5661036">
        <id>A1L4K1</id>
        <label>FSD2</label>
    </interactant>
    <organismsDiffer>false</organismsDiffer>
    <experiments>3</experiments>
</comment>
<comment type="interaction">
    <interactant intactId="EBI-2555767">
        <id>Q15973</id>
    </interactant>
    <interactant intactId="EBI-374781">
        <id>O76003</id>
        <label>GLRX3</label>
    </interactant>
    <organismsDiffer>false</organismsDiffer>
    <experiments>3</experiments>
</comment>
<comment type="interaction">
    <interactant intactId="EBI-2555767">
        <id>Q15973</id>
    </interactant>
    <interactant intactId="EBI-618309">
        <id>Q08379</id>
        <label>GOLGA2</label>
    </interactant>
    <organismsDiffer>false</organismsDiffer>
    <experiments>3</experiments>
</comment>
<comment type="interaction">
    <interactant intactId="EBI-2555767">
        <id>Q15973</id>
    </interactant>
    <interactant intactId="EBI-5916454">
        <id>A6NEM1</id>
        <label>GOLGA6L9</label>
    </interactant>
    <organismsDiffer>false</organismsDiffer>
    <experiments>3</experiments>
</comment>
<comment type="interaction">
    <interactant intactId="EBI-2555767">
        <id>Q15973</id>
    </interactant>
    <interactant intactId="EBI-747754">
        <id>P28799</id>
        <label>GRN</label>
    </interactant>
    <organismsDiffer>false</organismsDiffer>
    <experiments>3</experiments>
</comment>
<comment type="interaction">
    <interactant intactId="EBI-2555767">
        <id>Q15973</id>
    </interactant>
    <interactant intactId="EBI-712814">
        <id>P54257</id>
        <label>HAP1</label>
    </interactant>
    <organismsDiffer>false</organismsDiffer>
    <experiments>3</experiments>
</comment>
<comment type="interaction">
    <interactant intactId="EBI-2555767">
        <id>Q15973</id>
    </interactant>
    <interactant intactId="EBI-356991">
        <id>P54652</id>
        <label>HSPA2</label>
    </interactant>
    <organismsDiffer>false</organismsDiffer>
    <experiments>3</experiments>
</comment>
<comment type="interaction">
    <interactant intactId="EBI-2555767">
        <id>Q15973</id>
    </interactant>
    <interactant intactId="EBI-948001">
        <id>Q15323</id>
        <label>KRT31</label>
    </interactant>
    <organismsDiffer>false</organismsDiffer>
    <experiments>3</experiments>
</comment>
<comment type="interaction">
    <interactant intactId="EBI-2555767">
        <id>Q15973</id>
    </interactant>
    <interactant intactId="EBI-1047093">
        <id>O76011</id>
        <label>KRT34</label>
    </interactant>
    <organismsDiffer>false</organismsDiffer>
    <experiments>3</experiments>
</comment>
<comment type="interaction">
    <interactant intactId="EBI-2555767">
        <id>Q15973</id>
    </interactant>
    <interactant intactId="EBI-10171697">
        <id>Q6A162</id>
        <label>KRT40</label>
    </interactant>
    <organismsDiffer>false</organismsDiffer>
    <experiments>3</experiments>
</comment>
<comment type="interaction">
    <interactant intactId="EBI-2555767">
        <id>Q15973</id>
    </interactant>
    <interactant intactId="EBI-11959885">
        <id>Q07627</id>
        <label>KRTAP1-1</label>
    </interactant>
    <organismsDiffer>false</organismsDiffer>
    <experiments>3</experiments>
</comment>
<comment type="interaction">
    <interactant intactId="EBI-2555767">
        <id>Q15973</id>
    </interactant>
    <interactant intactId="EBI-10172150">
        <id>P60370</id>
        <label>KRTAP10-5</label>
    </interactant>
    <organismsDiffer>false</organismsDiffer>
    <experiments>3</experiments>
</comment>
<comment type="interaction">
    <interactant intactId="EBI-2555767">
        <id>Q15973</id>
    </interactant>
    <interactant intactId="EBI-10172290">
        <id>P60409</id>
        <label>KRTAP10-7</label>
    </interactant>
    <organismsDiffer>false</organismsDiffer>
    <experiments>3</experiments>
</comment>
<comment type="interaction">
    <interactant intactId="EBI-2555767">
        <id>Q15973</id>
    </interactant>
    <interactant intactId="EBI-10171774">
        <id>P60410</id>
        <label>KRTAP10-8</label>
    </interactant>
    <organismsDiffer>false</organismsDiffer>
    <experiments>6</experiments>
</comment>
<comment type="interaction">
    <interactant intactId="EBI-2555767">
        <id>Q15973</id>
    </interactant>
    <interactant intactId="EBI-10172052">
        <id>P60411</id>
        <label>KRTAP10-9</label>
    </interactant>
    <organismsDiffer>false</organismsDiffer>
    <experiments>6</experiments>
</comment>
<comment type="interaction">
    <interactant intactId="EBI-2555767">
        <id>Q15973</id>
    </interactant>
    <interactant intactId="EBI-11953334">
        <id>P60328</id>
        <label>KRTAP12-3</label>
    </interactant>
    <organismsDiffer>false</organismsDiffer>
    <experiments>3</experiments>
</comment>
<comment type="interaction">
    <interactant intactId="EBI-2555767">
        <id>Q15973</id>
    </interactant>
    <interactant intactId="EBI-10172511">
        <id>Q9BYR5</id>
        <label>KRTAP4-2</label>
    </interactant>
    <organismsDiffer>false</organismsDiffer>
    <experiments>3</experiments>
</comment>
<comment type="interaction">
    <interactant intactId="EBI-2555767">
        <id>Q15973</id>
    </interactant>
    <interactant intactId="EBI-3958099">
        <id>P26371</id>
        <label>KRTAP5-9</label>
    </interactant>
    <organismsDiffer>false</organismsDiffer>
    <experiments>6</experiments>
</comment>
<comment type="interaction">
    <interactant intactId="EBI-2555767">
        <id>Q15973</id>
    </interactant>
    <interactant intactId="EBI-740738">
        <id>O95751</id>
        <label>LDOC1</label>
    </interactant>
    <organismsDiffer>false</organismsDiffer>
    <experiments>3</experiments>
</comment>
<comment type="interaction">
    <interactant intactId="EBI-2555767">
        <id>Q15973</id>
    </interactant>
    <interactant intactId="EBI-741037">
        <id>Q9BRK4</id>
        <label>LZTS2</label>
    </interactant>
    <organismsDiffer>false</organismsDiffer>
    <experiments>3</experiments>
</comment>
<comment type="interaction">
    <interactant intactId="EBI-2555767">
        <id>Q15973</id>
    </interactant>
    <interactant intactId="EBI-724076">
        <id>Q99750</id>
        <label>MDFI</label>
    </interactant>
    <organismsDiffer>false</organismsDiffer>
    <experiments>6</experiments>
</comment>
<comment type="interaction">
    <interactant intactId="EBI-2555767">
        <id>Q15973</id>
    </interactant>
    <interactant intactId="EBI-748397">
        <id>P50222</id>
        <label>MEOX2</label>
    </interactant>
    <organismsDiffer>false</organismsDiffer>
    <experiments>3</experiments>
</comment>
<comment type="interaction">
    <interactant intactId="EBI-2555767">
        <id>Q15973</id>
    </interactant>
    <interactant intactId="EBI-16439278">
        <id>Q6FHY5</id>
        <label>MEOX2</label>
    </interactant>
    <organismsDiffer>false</organismsDiffer>
    <experiments>3</experiments>
</comment>
<comment type="interaction">
    <interactant intactId="EBI-2555767">
        <id>Q15973</id>
    </interactant>
    <interactant intactId="EBI-10172526">
        <id>Q9UJV3-2</id>
        <label>MID2</label>
    </interactant>
    <organismsDiffer>false</organismsDiffer>
    <experiments>3</experiments>
</comment>
<comment type="interaction">
    <interactant intactId="EBI-2555767">
        <id>Q15973</id>
    </interactant>
    <interactant intactId="EBI-11522433">
        <id>Q5JR59-3</id>
        <label>MTUS2</label>
    </interactant>
    <organismsDiffer>false</organismsDiffer>
    <experiments>3</experiments>
</comment>
<comment type="interaction">
    <interactant intactId="EBI-2555767">
        <id>Q15973</id>
    </interactant>
    <interactant intactId="EBI-22310682">
        <id>P0DPK4</id>
        <label>NOTCH2NLC</label>
    </interactant>
    <organismsDiffer>false</organismsDiffer>
    <experiments>3</experiments>
</comment>
<comment type="interaction">
    <interactant intactId="EBI-2555767">
        <id>Q15973</id>
    </interactant>
    <interactant intactId="EBI-11536584">
        <id>O15294-3</id>
        <label>OGT</label>
    </interactant>
    <organismsDiffer>false</organismsDiffer>
    <experiments>3</experiments>
</comment>
<comment type="interaction">
    <interactant intactId="EBI-2555767">
        <id>Q15973</id>
    </interactant>
    <interactant intactId="EBI-747278">
        <id>P26367</id>
        <label>PAX6</label>
    </interactant>
    <organismsDiffer>false</organismsDiffer>
    <experiments>3</experiments>
</comment>
<comment type="interaction">
    <interactant intactId="EBI-2555767">
        <id>Q15973</id>
    </interactant>
    <interactant intactId="EBI-9640281">
        <id>Q5VU43-2</id>
        <label>PDE4DIP</label>
    </interactant>
    <organismsDiffer>false</organismsDiffer>
    <experiments>3</experiments>
</comment>
<comment type="interaction">
    <interactant intactId="EBI-2555767">
        <id>Q15973</id>
    </interactant>
    <interactant intactId="EBI-50433196">
        <id>A0A6Q8PF08</id>
        <label>PMP22</label>
    </interactant>
    <organismsDiffer>false</organismsDiffer>
    <experiments>3</experiments>
</comment>
<comment type="interaction">
    <interactant intactId="EBI-2555767">
        <id>Q15973</id>
    </interactant>
    <interactant intactId="EBI-5235340">
        <id>Q7Z699</id>
        <label>SPRED1</label>
    </interactant>
    <organismsDiffer>false</organismsDiffer>
    <experiments>3</experiments>
</comment>
<comment type="interaction">
    <interactant intactId="EBI-2555767">
        <id>Q15973</id>
    </interactant>
    <interactant intactId="EBI-3867173">
        <id>A7MD48</id>
        <label>SRRM4</label>
    </interactant>
    <organismsDiffer>false</organismsDiffer>
    <experiments>3</experiments>
</comment>
<comment type="interaction">
    <interactant intactId="EBI-2555767">
        <id>Q15973</id>
    </interactant>
    <interactant intactId="EBI-2212028">
        <id>Q9Y2D8</id>
        <label>SSX2IP</label>
    </interactant>
    <organismsDiffer>false</organismsDiffer>
    <experiments>3</experiments>
</comment>
<comment type="interaction">
    <interactant intactId="EBI-2555767">
        <id>Q15973</id>
    </interactant>
    <interactant intactId="EBI-6872807">
        <id>Q8N0S2</id>
        <label>SYCE1</label>
    </interactant>
    <organismsDiffer>false</organismsDiffer>
    <experiments>3</experiments>
</comment>
<comment type="interaction">
    <interactant intactId="EBI-2555767">
        <id>Q15973</id>
    </interactant>
    <interactant intactId="EBI-533224">
        <id>P15884</id>
        <label>TCF4</label>
    </interactant>
    <organismsDiffer>false</organismsDiffer>
    <experiments>3</experiments>
</comment>
<comment type="interaction">
    <interactant intactId="EBI-2555767">
        <id>Q15973</id>
    </interactant>
    <interactant intactId="EBI-13636688">
        <id>P15884-3</id>
        <label>TCF4</label>
    </interactant>
    <organismsDiffer>false</organismsDiffer>
    <experiments>3</experiments>
</comment>
<comment type="interaction">
    <interactant intactId="EBI-2555767">
        <id>Q15973</id>
    </interactant>
    <interactant intactId="EBI-359224">
        <id>Q13077</id>
        <label>TRAF1</label>
    </interactant>
    <organismsDiffer>false</organismsDiffer>
    <experiments>6</experiments>
</comment>
<comment type="interaction">
    <interactant intactId="EBI-2555767">
        <id>Q15973</id>
    </interactant>
    <interactant intactId="EBI-744794">
        <id>Q9BZW7</id>
        <label>TSGA10</label>
    </interactant>
    <organismsDiffer>false</organismsDiffer>
    <experiments>3</experiments>
</comment>
<comment type="interaction">
    <interactant intactId="EBI-2555767">
        <id>Q15973</id>
    </interactant>
    <interactant intactId="EBI-607755">
        <id>Q9BZL1</id>
        <label>UBL5</label>
    </interactant>
    <organismsDiffer>false</organismsDiffer>
    <experiments>3</experiments>
</comment>
<comment type="interaction">
    <interactant intactId="EBI-2555767">
        <id>Q15973</id>
    </interactant>
    <interactant intactId="EBI-720609">
        <id>O76024</id>
        <label>WFS1</label>
    </interactant>
    <organismsDiffer>false</organismsDiffer>
    <experiments>3</experiments>
</comment>
<comment type="interaction">
    <interactant intactId="EBI-2555767">
        <id>Q15973</id>
    </interactant>
    <interactant intactId="EBI-11035148">
        <id>Q8TF50</id>
        <label>ZNF526</label>
    </interactant>
    <organismsDiffer>false</organismsDiffer>
    <experiments>3</experiments>
</comment>
<comment type="interaction">
    <interactant intactId="EBI-2555767">
        <id>Q15973</id>
    </interactant>
    <interactant intactId="EBI-12376497">
        <id>Q6AZW8</id>
        <label>ZNF660</label>
    </interactant>
    <organismsDiffer>false</organismsDiffer>
    <experiments>3</experiments>
</comment>
<comment type="interaction">
    <interactant intactId="EBI-2555767">
        <id>Q15973</id>
    </interactant>
    <interactant intactId="EBI-11962574">
        <id>Q96EG3</id>
        <label>ZNF837</label>
    </interactant>
    <organismsDiffer>false</organismsDiffer>
    <experiments>6</experiments>
</comment>
<comment type="interaction">
    <interactant intactId="EBI-2555767">
        <id>Q15973</id>
    </interactant>
    <interactant intactId="EBI-527853">
        <id>Q9UGI0</id>
        <label>ZRANB1</label>
    </interactant>
    <organismsDiffer>false</organismsDiffer>
    <experiments>3</experiments>
</comment>
<comment type="subcellular location">
    <subcellularLocation>
        <location evidence="6">Nucleus</location>
    </subcellularLocation>
</comment>
<comment type="alternative products">
    <event type="alternative splicing"/>
    <isoform>
        <id>Q15973-3</id>
        <name>1</name>
        <sequence type="displayed"/>
    </isoform>
    <isoform>
        <id>Q15973-4</id>
        <name>2</name>
        <sequence type="described" ref="VSP_015692"/>
    </isoform>
    <isoform>
        <id>Q15973-1</id>
        <name>3</name>
        <name>HZF-16.2</name>
        <sequence type="described" ref="VSP_015691"/>
    </isoform>
    <isoform>
        <id>Q15973-2</id>
        <name>4</name>
        <name>HZF-16.1</name>
        <sequence type="described" ref="VSP_015691 VSP_006895"/>
    </isoform>
    <isoform>
        <id>Q15973-5</id>
        <name>5</name>
        <sequence type="described" ref="VSP_046852"/>
    </isoform>
</comment>
<comment type="similarity">
    <text evidence="6">Belongs to the krueppel C2H2-type zinc-finger protein family.</text>
</comment>
<protein>
    <recommendedName>
        <fullName>Zinc finger protein 124</fullName>
    </recommendedName>
    <alternativeName>
        <fullName>Zinc finger protein HZF-16</fullName>
    </alternativeName>
</protein>
<feature type="chain" id="PRO_0000047410" description="Zinc finger protein 124">
    <location>
        <begin position="1"/>
        <end position="351"/>
    </location>
</feature>
<feature type="domain" description="KRAB" evidence="2">
    <location>
        <begin position="13"/>
        <end position="106"/>
    </location>
</feature>
<feature type="zinc finger region" description="C2H2-type 1" evidence="1">
    <location>
        <begin position="122"/>
        <end position="144"/>
    </location>
</feature>
<feature type="zinc finger region" description="C2H2-type 2" evidence="1">
    <location>
        <begin position="150"/>
        <end position="172"/>
    </location>
</feature>
<feature type="zinc finger region" description="C2H2-type 3" evidence="1">
    <location>
        <begin position="178"/>
        <end position="200"/>
    </location>
</feature>
<feature type="zinc finger region" description="C2H2-type 4" evidence="1">
    <location>
        <begin position="206"/>
        <end position="228"/>
    </location>
</feature>
<feature type="zinc finger region" description="C2H2-type 5" evidence="1">
    <location>
        <begin position="234"/>
        <end position="256"/>
    </location>
</feature>
<feature type="zinc finger region" description="C2H2-type 6" evidence="1">
    <location>
        <begin position="262"/>
        <end position="284"/>
    </location>
</feature>
<feature type="zinc finger region" description="C2H2-type 7" evidence="1">
    <location>
        <begin position="290"/>
        <end position="312"/>
    </location>
</feature>
<feature type="zinc finger region" description="C2H2-type 8" evidence="1">
    <location>
        <begin position="318"/>
        <end position="340"/>
    </location>
</feature>
<feature type="splice variant" id="VSP_015691" description="In isoform 3 and isoform 4." evidence="5">
    <original>MSGHPGSWEMNSVAFEDVAVNFTQEEWALLDPSQKNLYRDVMQETFRNLASIGNKGEDQSIEDQYKNSSRNL</original>
    <variation>MNALCVKNSSYVHSSLH</variation>
    <location>
        <begin position="1"/>
        <end position="72"/>
    </location>
</feature>
<feature type="splice variant" id="VSP_015692" description="In isoform 2." evidence="3 4">
    <location>
        <begin position="73"/>
        <end position="134"/>
    </location>
</feature>
<feature type="splice variant" id="VSP_046852" description="In isoform 5." evidence="4">
    <location>
        <begin position="74"/>
        <end position="351"/>
    </location>
</feature>
<feature type="splice variant" id="VSP_006895" description="In isoform 4." evidence="5">
    <location>
        <begin position="190"/>
        <end position="329"/>
    </location>
</feature>